<dbReference type="EMBL" id="AB168843">
    <property type="protein sequence ID" value="BAE00947.1"/>
    <property type="molecule type" value="mRNA"/>
</dbReference>
<dbReference type="RefSeq" id="XP_005577643.1">
    <property type="nucleotide sequence ID" value="XM_005577586.4"/>
</dbReference>
<dbReference type="BMRB" id="Q4R7H5"/>
<dbReference type="SMR" id="Q4R7H5"/>
<dbReference type="STRING" id="9541.ENSMFAP00000010421"/>
<dbReference type="GeneID" id="101865793"/>
<dbReference type="KEGG" id="mcf:101865793"/>
<dbReference type="CTD" id="1937"/>
<dbReference type="VEuPathDB" id="HostDB:ENSMFAG00000007224"/>
<dbReference type="eggNOG" id="KOG0867">
    <property type="taxonomic scope" value="Eukaryota"/>
</dbReference>
<dbReference type="eggNOG" id="KOG1627">
    <property type="taxonomic scope" value="Eukaryota"/>
</dbReference>
<dbReference type="OMA" id="TQYFSWT"/>
<dbReference type="OrthoDB" id="3291at314294"/>
<dbReference type="Proteomes" id="UP000233100">
    <property type="component" value="Chromosome 14"/>
</dbReference>
<dbReference type="GO" id="GO:0005737">
    <property type="term" value="C:cytoplasm"/>
    <property type="evidence" value="ECO:0007669"/>
    <property type="project" value="TreeGrafter"/>
</dbReference>
<dbReference type="GO" id="GO:0005634">
    <property type="term" value="C:nucleus"/>
    <property type="evidence" value="ECO:0007669"/>
    <property type="project" value="TreeGrafter"/>
</dbReference>
<dbReference type="GO" id="GO:0003746">
    <property type="term" value="F:translation elongation factor activity"/>
    <property type="evidence" value="ECO:0007669"/>
    <property type="project" value="UniProtKB-KW"/>
</dbReference>
<dbReference type="CDD" id="cd03181">
    <property type="entry name" value="GST_C_EF1Bgamma_like"/>
    <property type="match status" value="1"/>
</dbReference>
<dbReference type="CDD" id="cd03044">
    <property type="entry name" value="GST_N_EF1Bgamma"/>
    <property type="match status" value="1"/>
</dbReference>
<dbReference type="FunFam" id="1.20.1050.10:FF:000021">
    <property type="entry name" value="Elongation factor 1-gamma"/>
    <property type="match status" value="1"/>
</dbReference>
<dbReference type="FunFam" id="3.40.30.10:FF:000088">
    <property type="entry name" value="Elongation factor 1-gamma"/>
    <property type="match status" value="1"/>
</dbReference>
<dbReference type="FunFam" id="3.30.70.1010:FF:000001">
    <property type="entry name" value="Elongation factor 1-gamma 1"/>
    <property type="match status" value="1"/>
</dbReference>
<dbReference type="Gene3D" id="1.20.1050.10">
    <property type="match status" value="1"/>
</dbReference>
<dbReference type="Gene3D" id="3.40.30.10">
    <property type="entry name" value="Glutaredoxin"/>
    <property type="match status" value="1"/>
</dbReference>
<dbReference type="Gene3D" id="3.30.70.1010">
    <property type="entry name" value="Translation elongation factor EF1B, gamma chain, conserved domain"/>
    <property type="match status" value="1"/>
</dbReference>
<dbReference type="InterPro" id="IPR050802">
    <property type="entry name" value="EF-GSTs"/>
</dbReference>
<dbReference type="InterPro" id="IPR001662">
    <property type="entry name" value="EF1B_G_C"/>
</dbReference>
<dbReference type="InterPro" id="IPR036433">
    <property type="entry name" value="EF1B_G_C_sf"/>
</dbReference>
<dbReference type="InterPro" id="IPR010987">
    <property type="entry name" value="Glutathione-S-Trfase_C-like"/>
</dbReference>
<dbReference type="InterPro" id="IPR036282">
    <property type="entry name" value="Glutathione-S-Trfase_C_sf"/>
</dbReference>
<dbReference type="InterPro" id="IPR040079">
    <property type="entry name" value="Glutathione_S-Trfase"/>
</dbReference>
<dbReference type="InterPro" id="IPR004045">
    <property type="entry name" value="Glutathione_S-Trfase_N"/>
</dbReference>
<dbReference type="InterPro" id="IPR004046">
    <property type="entry name" value="GST_C"/>
</dbReference>
<dbReference type="InterPro" id="IPR036249">
    <property type="entry name" value="Thioredoxin-like_sf"/>
</dbReference>
<dbReference type="PANTHER" id="PTHR43986">
    <property type="entry name" value="ELONGATION FACTOR 1-GAMMA"/>
    <property type="match status" value="1"/>
</dbReference>
<dbReference type="PANTHER" id="PTHR43986:SF1">
    <property type="entry name" value="ELONGATION FACTOR 1-GAMMA"/>
    <property type="match status" value="1"/>
</dbReference>
<dbReference type="Pfam" id="PF00647">
    <property type="entry name" value="EF1G"/>
    <property type="match status" value="1"/>
</dbReference>
<dbReference type="Pfam" id="PF00043">
    <property type="entry name" value="GST_C"/>
    <property type="match status" value="1"/>
</dbReference>
<dbReference type="Pfam" id="PF02798">
    <property type="entry name" value="GST_N"/>
    <property type="match status" value="1"/>
</dbReference>
<dbReference type="SFLD" id="SFLDS00019">
    <property type="entry name" value="Glutathione_Transferase_(cytos"/>
    <property type="match status" value="1"/>
</dbReference>
<dbReference type="SFLD" id="SFLDG00358">
    <property type="entry name" value="Main_(cytGST)"/>
    <property type="match status" value="1"/>
</dbReference>
<dbReference type="SMART" id="SM01183">
    <property type="entry name" value="EF1G"/>
    <property type="match status" value="1"/>
</dbReference>
<dbReference type="SUPFAM" id="SSF89942">
    <property type="entry name" value="eEF1-gamma domain"/>
    <property type="match status" value="1"/>
</dbReference>
<dbReference type="SUPFAM" id="SSF47616">
    <property type="entry name" value="GST C-terminal domain-like"/>
    <property type="match status" value="1"/>
</dbReference>
<dbReference type="SUPFAM" id="SSF52833">
    <property type="entry name" value="Thioredoxin-like"/>
    <property type="match status" value="1"/>
</dbReference>
<dbReference type="PROSITE" id="PS50040">
    <property type="entry name" value="EF1G_C"/>
    <property type="match status" value="1"/>
</dbReference>
<dbReference type="PROSITE" id="PS50405">
    <property type="entry name" value="GST_CTER"/>
    <property type="match status" value="1"/>
</dbReference>
<dbReference type="PROSITE" id="PS50404">
    <property type="entry name" value="GST_NTER"/>
    <property type="match status" value="1"/>
</dbReference>
<feature type="initiator methionine" description="Removed" evidence="2">
    <location>
        <position position="1"/>
    </location>
</feature>
<feature type="chain" id="PRO_0000284655" description="Elongation factor 1-gamma">
    <location>
        <begin position="2"/>
        <end position="437"/>
    </location>
</feature>
<feature type="domain" description="GST N-terminal">
    <location>
        <begin position="2"/>
        <end position="87"/>
    </location>
</feature>
<feature type="domain" description="GST C-terminal">
    <location>
        <begin position="88"/>
        <end position="216"/>
    </location>
</feature>
<feature type="domain" description="EF-1-gamma C-terminal" evidence="4">
    <location>
        <begin position="276"/>
        <end position="437"/>
    </location>
</feature>
<feature type="region of interest" description="Disordered" evidence="5">
    <location>
        <begin position="221"/>
        <end position="268"/>
    </location>
</feature>
<feature type="compositionally biased region" description="Basic and acidic residues" evidence="5">
    <location>
        <begin position="221"/>
        <end position="254"/>
    </location>
</feature>
<feature type="modified residue" description="N-acetylalanine" evidence="2">
    <location>
        <position position="2"/>
    </location>
</feature>
<feature type="modified residue" description="N6-acetyllysine" evidence="2">
    <location>
        <position position="147"/>
    </location>
</feature>
<feature type="modified residue" description="N6-acetyllysine" evidence="3">
    <location>
        <position position="212"/>
    </location>
</feature>
<feature type="modified residue" description="N6-acetyllysine" evidence="3">
    <location>
        <position position="401"/>
    </location>
</feature>
<feature type="modified residue" description="N6-acetyllysine; alternate" evidence="2">
    <location>
        <position position="434"/>
    </location>
</feature>
<feature type="modified residue" description="N6-malonyllysine; alternate" evidence="1">
    <location>
        <position position="434"/>
    </location>
</feature>
<feature type="cross-link" description="Glycyl lysine isopeptide (Lys-Gly) (interchain with G-Cter in SUMO1)" evidence="2">
    <location>
        <position position="253"/>
    </location>
</feature>
<feature type="cross-link" description="Glycyl lysine isopeptide (Lys-Gly) (interchain with G-Cter in SUMO2)" evidence="2">
    <location>
        <position position="285"/>
    </location>
</feature>
<keyword id="KW-0007">Acetylation</keyword>
<keyword id="KW-0251">Elongation factor</keyword>
<keyword id="KW-1017">Isopeptide bond</keyword>
<keyword id="KW-0648">Protein biosynthesis</keyword>
<keyword id="KW-1185">Reference proteome</keyword>
<keyword id="KW-0832">Ubl conjugation</keyword>
<protein>
    <recommendedName>
        <fullName>Elongation factor 1-gamma</fullName>
        <shortName>EF-1-gamma</shortName>
    </recommendedName>
    <alternativeName>
        <fullName>eEF-1B gamma</fullName>
    </alternativeName>
</protein>
<organism>
    <name type="scientific">Macaca fascicularis</name>
    <name type="common">Crab-eating macaque</name>
    <name type="synonym">Cynomolgus monkey</name>
    <dbReference type="NCBI Taxonomy" id="9541"/>
    <lineage>
        <taxon>Eukaryota</taxon>
        <taxon>Metazoa</taxon>
        <taxon>Chordata</taxon>
        <taxon>Craniata</taxon>
        <taxon>Vertebrata</taxon>
        <taxon>Euteleostomi</taxon>
        <taxon>Mammalia</taxon>
        <taxon>Eutheria</taxon>
        <taxon>Euarchontoglires</taxon>
        <taxon>Primates</taxon>
        <taxon>Haplorrhini</taxon>
        <taxon>Catarrhini</taxon>
        <taxon>Cercopithecidae</taxon>
        <taxon>Cercopithecinae</taxon>
        <taxon>Macaca</taxon>
    </lineage>
</organism>
<name>EF1G_MACFA</name>
<accession>Q4R7H5</accession>
<proteinExistence type="evidence at transcript level"/>
<sequence length="437" mass="50093">MAAGTLYTYPENWRAFKALIAAQYSGAQVRVLSAPPHFHFGQTNRTPEFLRKFPAGKVPAFEGDDGFCVFESNAIAYYVSNEELRGSTPEAAAQVVQWVSFADSDIVPPASTWVFPTLGIMHHNKQATENAKEEVRRILGLLDAHLKTRTFLVGERVTLADITVVCTLLWLYKQVLEPSFRQAFPNTNRWFLTCINQPQFRAVLGEVKLCEKMAQFDAKKFAETQPKKDTPRKEKGSREEKQKPQAERKEEKKAAAPAPEEEMDECEQALAAEPKAKDPFAHLPKSTFVLDEFKRKYSNEDTLSVALPYFWEHFDKDGWSLWYSEYRFPEELTQTFMSCNLITGMFQRLDKLRKNAFASVILFGTNNSSSISGVWVFRGQELAFPLSPDWQVDYESYTWRKLDPGSEETQTLVREYFSWEGAFQHVGKAFNQGKIFK</sequence>
<gene>
    <name type="primary">EEF1G</name>
    <name type="ORF">QtsA-15310</name>
</gene>
<reference key="1">
    <citation type="submission" date="2005-06" db="EMBL/GenBank/DDBJ databases">
        <title>DNA sequences of macaque genes expressed in brain or testis and its evolutionary implications.</title>
        <authorList>
            <consortium name="International consortium for macaque cDNA sequencing and analysis"/>
        </authorList>
    </citation>
    <scope>NUCLEOTIDE SEQUENCE [LARGE SCALE MRNA]</scope>
    <source>
        <tissue>Testis</tissue>
    </source>
</reference>
<comment type="function">
    <text evidence="1">Probably plays a role in anchoring the complex to other cellular components.</text>
</comment>
<comment type="subunit">
    <text evidence="1">EF-1 is composed of four subunits: alpha, beta, delta, and gamma.</text>
</comment>
<evidence type="ECO:0000250" key="1"/>
<evidence type="ECO:0000250" key="2">
    <source>
        <dbReference type="UniProtKB" id="P26641"/>
    </source>
</evidence>
<evidence type="ECO:0000250" key="3">
    <source>
        <dbReference type="UniProtKB" id="Q9D8N0"/>
    </source>
</evidence>
<evidence type="ECO:0000255" key="4">
    <source>
        <dbReference type="PROSITE-ProRule" id="PRU00519"/>
    </source>
</evidence>
<evidence type="ECO:0000256" key="5">
    <source>
        <dbReference type="SAM" id="MobiDB-lite"/>
    </source>
</evidence>